<evidence type="ECO:0000255" key="1"/>
<evidence type="ECO:0000305" key="2"/>
<keyword id="KW-0143">Chaperone</keyword>
<keyword id="KW-1029">Fimbrium biogenesis</keyword>
<keyword id="KW-0393">Immunoglobulin domain</keyword>
<keyword id="KW-0574">Periplasm</keyword>
<keyword id="KW-0732">Signal</keyword>
<dbReference type="EMBL" id="M55912">
    <property type="protein sequence ID" value="AAA25094.1"/>
    <property type="molecule type" value="Genomic_DNA"/>
</dbReference>
<dbReference type="PIR" id="C39142">
    <property type="entry name" value="C39142"/>
</dbReference>
<dbReference type="SMR" id="P21646"/>
<dbReference type="GO" id="GO:0030288">
    <property type="term" value="C:outer membrane-bounded periplasmic space"/>
    <property type="evidence" value="ECO:0007669"/>
    <property type="project" value="InterPro"/>
</dbReference>
<dbReference type="GO" id="GO:0071555">
    <property type="term" value="P:cell wall organization"/>
    <property type="evidence" value="ECO:0007669"/>
    <property type="project" value="InterPro"/>
</dbReference>
<dbReference type="GO" id="GO:0061077">
    <property type="term" value="P:chaperone-mediated protein folding"/>
    <property type="evidence" value="ECO:0007669"/>
    <property type="project" value="InterPro"/>
</dbReference>
<dbReference type="Gene3D" id="2.60.40.10">
    <property type="entry name" value="Immunoglobulins"/>
    <property type="match status" value="2"/>
</dbReference>
<dbReference type="InterPro" id="IPR013783">
    <property type="entry name" value="Ig-like_fold"/>
</dbReference>
<dbReference type="InterPro" id="IPR008962">
    <property type="entry name" value="PapD-like_sf"/>
</dbReference>
<dbReference type="InterPro" id="IPR050643">
    <property type="entry name" value="Periplasmic_pilus_chap"/>
</dbReference>
<dbReference type="InterPro" id="IPR036316">
    <property type="entry name" value="Pili_assmbl_chap_C_dom_sf"/>
</dbReference>
<dbReference type="InterPro" id="IPR001829">
    <property type="entry name" value="Pili_assmbl_chaperone_bac"/>
</dbReference>
<dbReference type="InterPro" id="IPR016148">
    <property type="entry name" value="Pili_assmbl_chaperone_C"/>
</dbReference>
<dbReference type="InterPro" id="IPR018046">
    <property type="entry name" value="Pili_assmbl_chaperone_CS"/>
</dbReference>
<dbReference type="InterPro" id="IPR016147">
    <property type="entry name" value="Pili_assmbl_chaperone_N"/>
</dbReference>
<dbReference type="PANTHER" id="PTHR30251:SF2">
    <property type="entry name" value="FIMBRIAL CHAPERONE YADV-RELATED"/>
    <property type="match status" value="1"/>
</dbReference>
<dbReference type="PANTHER" id="PTHR30251">
    <property type="entry name" value="PILUS ASSEMBLY CHAPERONE"/>
    <property type="match status" value="1"/>
</dbReference>
<dbReference type="Pfam" id="PF02753">
    <property type="entry name" value="PapD_C"/>
    <property type="match status" value="1"/>
</dbReference>
<dbReference type="Pfam" id="PF00345">
    <property type="entry name" value="PapD_N"/>
    <property type="match status" value="1"/>
</dbReference>
<dbReference type="PRINTS" id="PR00969">
    <property type="entry name" value="CHAPERONPILI"/>
</dbReference>
<dbReference type="SUPFAM" id="SSF49354">
    <property type="entry name" value="PapD-like"/>
    <property type="match status" value="1"/>
</dbReference>
<dbReference type="SUPFAM" id="SSF49584">
    <property type="entry name" value="Periplasmic chaperone C-domain"/>
    <property type="match status" value="1"/>
</dbReference>
<dbReference type="PROSITE" id="PS00635">
    <property type="entry name" value="PILI_CHAPERONE"/>
    <property type="match status" value="1"/>
</dbReference>
<reference key="1">
    <citation type="journal article" date="1991" name="J. Bacteriol.">
        <title>Nucleotide sequence and functions of mrk determinants necessary for expression of type 3 fimbriae in Klebsiella pneumoniae.</title>
        <authorList>
            <person name="Allen B.L."/>
            <person name="Gerlach G.-F."/>
            <person name="Clegg S."/>
        </authorList>
    </citation>
    <scope>NUCLEOTIDE SEQUENCE [GENOMIC DNA]</scope>
    <source>
        <strain>IA565</strain>
    </source>
</reference>
<feature type="signal peptide" evidence="1">
    <location>
        <begin position="1"/>
        <end position="18"/>
    </location>
</feature>
<feature type="chain" id="PRO_0000009282" description="Chaperone protein MrkB">
    <location>
        <begin position="19"/>
        <end position="233"/>
    </location>
</feature>
<gene>
    <name type="primary">mrkB</name>
</gene>
<organism>
    <name type="scientific">Klebsiella pneumoniae</name>
    <dbReference type="NCBI Taxonomy" id="573"/>
    <lineage>
        <taxon>Bacteria</taxon>
        <taxon>Pseudomonadati</taxon>
        <taxon>Pseudomonadota</taxon>
        <taxon>Gammaproteobacteria</taxon>
        <taxon>Enterobacterales</taxon>
        <taxon>Enterobacteriaceae</taxon>
        <taxon>Klebsiella/Raoultella group</taxon>
        <taxon>Klebsiella</taxon>
        <taxon>Klebsiella pneumoniae complex</taxon>
    </lineage>
</organism>
<proteinExistence type="inferred from homology"/>
<name>MRKB_KLEPN</name>
<accession>P21646</accession>
<comment type="function">
    <text>Mediates assembly of pili by forming soluble multimeric complexes with pili subunits as an intermediate step in the assembly process. This protein is involved in type 3 pili assembly.</text>
</comment>
<comment type="subcellular location">
    <subcellularLocation>
        <location>Periplasm</location>
    </subcellularLocation>
</comment>
<comment type="similarity">
    <text evidence="2">Belongs to the periplasmic pilus chaperone family.</text>
</comment>
<sequence>MKRIALFFCFIFSFAAHANNIIVNGTRFIYPGNEKEITVQLSNTADRPALATAWLDNGNADATPDTITTPFIITPPISRVDAKSGQTLRIKLGSNAGLAKDKETLWWLNLLEIPPVEASQKNEGQNILQLAIRSRFKFIYRPAGLGNRDAAAEKLALSANGSSLSVSNPTPFYITVSRISRNGGKALNSKTVMFAPQSSQTIALSSAVSKGETLTVNNINDYGADVAVKVTVK</sequence>
<protein>
    <recommendedName>
        <fullName>Chaperone protein MrkB</fullName>
    </recommendedName>
</protein>